<evidence type="ECO:0000250" key="1"/>
<evidence type="ECO:0000269" key="2">
    <source>
    </source>
</evidence>
<evidence type="ECO:0000305" key="3"/>
<protein>
    <recommendedName>
        <fullName>Brevinin-2DYa</fullName>
    </recommendedName>
</protein>
<feature type="peptide" id="PRO_0000311599" description="Brevinin-2DYa">
    <location>
        <begin position="1"/>
        <end position="33"/>
    </location>
</feature>
<feature type="disulfide bond" evidence="1">
    <location>
        <begin position="27"/>
        <end position="33"/>
    </location>
</feature>
<comment type="function">
    <text evidence="1">Antimicrobial peptide.</text>
</comment>
<comment type="subcellular location">
    <subcellularLocation>
        <location>Secreted</location>
    </subcellularLocation>
</comment>
<comment type="tissue specificity">
    <text>Expressed by the skin glands.</text>
</comment>
<comment type="mass spectrometry"/>
<comment type="similarity">
    <text evidence="3">Belongs to the frog skin active peptide (FSAP) family. Brevinin subfamily.</text>
</comment>
<organism>
    <name type="scientific">Rana dybowskii</name>
    <name type="common">Dybovsky's frog</name>
    <name type="synonym">Korean brown frog</name>
    <dbReference type="NCBI Taxonomy" id="71582"/>
    <lineage>
        <taxon>Eukaryota</taxon>
        <taxon>Metazoa</taxon>
        <taxon>Chordata</taxon>
        <taxon>Craniata</taxon>
        <taxon>Vertebrata</taxon>
        <taxon>Euteleostomi</taxon>
        <taxon>Amphibia</taxon>
        <taxon>Batrachia</taxon>
        <taxon>Anura</taxon>
        <taxon>Neobatrachia</taxon>
        <taxon>Ranoidea</taxon>
        <taxon>Ranidae</taxon>
        <taxon>Rana</taxon>
        <taxon>Rana</taxon>
    </lineage>
</organism>
<accession>P0C5X1</accession>
<name>BR2A_RANDY</name>
<reference key="1">
    <citation type="journal article" date="2007" name="Toxicon">
        <title>Cytolytic peptides belonging to the brevinin-1 and brevinin-2 families isolated from the skin of the Japanese brown frog, Rana dybowskii.</title>
        <authorList>
            <person name="Conlon J.M."/>
            <person name="Kolodziejek J."/>
            <person name="Nowotny N."/>
            <person name="Leprince J."/>
            <person name="Vaudry H."/>
            <person name="Coquet L."/>
            <person name="Jouenne T."/>
            <person name="Iwamuro S."/>
        </authorList>
    </citation>
    <scope>PROTEIN SEQUENCE</scope>
    <scope>MASS SPECTROMETRY</scope>
    <source>
        <tissue>Skin secretion</tissue>
    </source>
</reference>
<dbReference type="SMR" id="P0C5X1"/>
<dbReference type="GO" id="GO:0005576">
    <property type="term" value="C:extracellular region"/>
    <property type="evidence" value="ECO:0007669"/>
    <property type="project" value="UniProtKB-SubCell"/>
</dbReference>
<dbReference type="GO" id="GO:0042742">
    <property type="term" value="P:defense response to bacterium"/>
    <property type="evidence" value="ECO:0007669"/>
    <property type="project" value="UniProtKB-KW"/>
</dbReference>
<dbReference type="InterPro" id="IPR012521">
    <property type="entry name" value="Antimicrobial_frog_2"/>
</dbReference>
<dbReference type="Pfam" id="PF08023">
    <property type="entry name" value="Antimicrobial_2"/>
    <property type="match status" value="1"/>
</dbReference>
<keyword id="KW-0878">Amphibian defense peptide</keyword>
<keyword id="KW-0044">Antibiotic</keyword>
<keyword id="KW-0929">Antimicrobial</keyword>
<keyword id="KW-0903">Direct protein sequencing</keyword>
<keyword id="KW-1015">Disulfide bond</keyword>
<keyword id="KW-0964">Secreted</keyword>
<proteinExistence type="evidence at protein level"/>
<sequence>GLLSAVKGVLKGAGKNVAGSLMDKLKCKLFGGC</sequence>